<feature type="chain" id="PRO_0000303461" description="tRNA N6-adenosine threonylcarbamoyltransferase">
    <location>
        <begin position="1"/>
        <end position="350"/>
    </location>
</feature>
<feature type="binding site" evidence="1">
    <location>
        <position position="117"/>
    </location>
    <ligand>
        <name>Fe cation</name>
        <dbReference type="ChEBI" id="CHEBI:24875"/>
    </ligand>
</feature>
<feature type="binding site" evidence="1">
    <location>
        <position position="121"/>
    </location>
    <ligand>
        <name>Fe cation</name>
        <dbReference type="ChEBI" id="CHEBI:24875"/>
    </ligand>
</feature>
<feature type="binding site" evidence="1">
    <location>
        <begin position="140"/>
        <end position="144"/>
    </location>
    <ligand>
        <name>substrate</name>
    </ligand>
</feature>
<feature type="binding site" evidence="1">
    <location>
        <position position="173"/>
    </location>
    <ligand>
        <name>substrate</name>
    </ligand>
</feature>
<feature type="binding site" evidence="1">
    <location>
        <position position="186"/>
    </location>
    <ligand>
        <name>substrate</name>
    </ligand>
</feature>
<feature type="binding site" evidence="1">
    <location>
        <position position="277"/>
    </location>
    <ligand>
        <name>substrate</name>
    </ligand>
</feature>
<feature type="binding site" evidence="1">
    <location>
        <position position="305"/>
    </location>
    <ligand>
        <name>Fe cation</name>
        <dbReference type="ChEBI" id="CHEBI:24875"/>
    </ligand>
</feature>
<proteinExistence type="inferred from homology"/>
<sequence length="350" mass="35539">MALILGIESSCDETAAAVIDSNGASLEARIVAQRIASQDEAHRPYGGVVPEIAARAHAEVLSPMIAAVLADAGIGLDDLDAIAATAGPGLIGGVMVGLVTGKALAMAADKPLIAVNHLEGHALSPRLAEPSLQYPYLLLLVSGGHCQILEVAGVGQFRRLATTIDDALGEAFDKTAKILGLGYPGGPAVERMAREGNPKAVPLPRPLVGSGEPHFSFAGLKSAVMRAKDAGVHGDADIAASFQQAAIDCVIDRTRIALETASPGMTALVVAGGVAANAALRGALEGLAESHGLSLVAPPPKLCTDNAAMIGWAGAERLALGYVDPLDVAARPRWPLDENAAPVRGAGVKA</sequence>
<evidence type="ECO:0000255" key="1">
    <source>
        <dbReference type="HAMAP-Rule" id="MF_01445"/>
    </source>
</evidence>
<protein>
    <recommendedName>
        <fullName evidence="1">tRNA N6-adenosine threonylcarbamoyltransferase</fullName>
        <ecNumber evidence="1">2.3.1.234</ecNumber>
    </recommendedName>
    <alternativeName>
        <fullName evidence="1">N6-L-threonylcarbamoyladenine synthase</fullName>
        <shortName evidence="1">t(6)A synthase</shortName>
    </alternativeName>
    <alternativeName>
        <fullName evidence="1">t(6)A37 threonylcarbamoyladenosine biosynthesis protein TsaD</fullName>
    </alternativeName>
    <alternativeName>
        <fullName evidence="1">tRNA threonylcarbamoyladenosine biosynthesis protein TsaD</fullName>
    </alternativeName>
</protein>
<reference key="1">
    <citation type="submission" date="2006-01" db="EMBL/GenBank/DDBJ databases">
        <title>Complete sequence of Novosphingobium aromaticivorans DSM 12444.</title>
        <authorList>
            <consortium name="US DOE Joint Genome Institute"/>
            <person name="Copeland A."/>
            <person name="Lucas S."/>
            <person name="Lapidus A."/>
            <person name="Barry K."/>
            <person name="Detter J.C."/>
            <person name="Glavina T."/>
            <person name="Hammon N."/>
            <person name="Israni S."/>
            <person name="Pitluck S."/>
            <person name="Chain P."/>
            <person name="Malfatti S."/>
            <person name="Shin M."/>
            <person name="Vergez L."/>
            <person name="Schmutz J."/>
            <person name="Larimer F."/>
            <person name="Land M."/>
            <person name="Kyrpides N."/>
            <person name="Ivanova N."/>
            <person name="Fredrickson J."/>
            <person name="Balkwill D."/>
            <person name="Romine M.F."/>
            <person name="Richardson P."/>
        </authorList>
    </citation>
    <scope>NUCLEOTIDE SEQUENCE [LARGE SCALE GENOMIC DNA]</scope>
    <source>
        <strain>ATCC 700278 / DSM 12444 / CCUG 56034 / CIP 105152 / NBRC 16084 / F199</strain>
    </source>
</reference>
<comment type="function">
    <text evidence="1">Required for the formation of a threonylcarbamoyl group on adenosine at position 37 (t(6)A37) in tRNAs that read codons beginning with adenine. Is involved in the transfer of the threonylcarbamoyl moiety of threonylcarbamoyl-AMP (TC-AMP) to the N6 group of A37, together with TsaE and TsaB. TsaD likely plays a direct catalytic role in this reaction.</text>
</comment>
<comment type="catalytic activity">
    <reaction evidence="1">
        <text>L-threonylcarbamoyladenylate + adenosine(37) in tRNA = N(6)-L-threonylcarbamoyladenosine(37) in tRNA + AMP + H(+)</text>
        <dbReference type="Rhea" id="RHEA:37059"/>
        <dbReference type="Rhea" id="RHEA-COMP:10162"/>
        <dbReference type="Rhea" id="RHEA-COMP:10163"/>
        <dbReference type="ChEBI" id="CHEBI:15378"/>
        <dbReference type="ChEBI" id="CHEBI:73682"/>
        <dbReference type="ChEBI" id="CHEBI:74411"/>
        <dbReference type="ChEBI" id="CHEBI:74418"/>
        <dbReference type="ChEBI" id="CHEBI:456215"/>
        <dbReference type="EC" id="2.3.1.234"/>
    </reaction>
</comment>
<comment type="cofactor">
    <cofactor evidence="1">
        <name>Fe(2+)</name>
        <dbReference type="ChEBI" id="CHEBI:29033"/>
    </cofactor>
    <text evidence="1">Binds 1 Fe(2+) ion per subunit.</text>
</comment>
<comment type="subcellular location">
    <subcellularLocation>
        <location evidence="1">Cytoplasm</location>
    </subcellularLocation>
</comment>
<comment type="similarity">
    <text evidence="1">Belongs to the KAE1 / TsaD family.</text>
</comment>
<dbReference type="EC" id="2.3.1.234" evidence="1"/>
<dbReference type="EMBL" id="CP000248">
    <property type="protein sequence ID" value="ABD27221.1"/>
    <property type="molecule type" value="Genomic_DNA"/>
</dbReference>
<dbReference type="RefSeq" id="WP_011446425.1">
    <property type="nucleotide sequence ID" value="NC_007794.1"/>
</dbReference>
<dbReference type="SMR" id="Q2G4K2"/>
<dbReference type="STRING" id="279238.Saro_2785"/>
<dbReference type="KEGG" id="nar:Saro_2785"/>
<dbReference type="eggNOG" id="COG0533">
    <property type="taxonomic scope" value="Bacteria"/>
</dbReference>
<dbReference type="HOGENOM" id="CLU_023208_0_2_5"/>
<dbReference type="Proteomes" id="UP000009134">
    <property type="component" value="Chromosome"/>
</dbReference>
<dbReference type="GO" id="GO:0005737">
    <property type="term" value="C:cytoplasm"/>
    <property type="evidence" value="ECO:0007669"/>
    <property type="project" value="UniProtKB-SubCell"/>
</dbReference>
<dbReference type="GO" id="GO:0005506">
    <property type="term" value="F:iron ion binding"/>
    <property type="evidence" value="ECO:0007669"/>
    <property type="project" value="UniProtKB-UniRule"/>
</dbReference>
<dbReference type="GO" id="GO:0061711">
    <property type="term" value="F:N(6)-L-threonylcarbamoyladenine synthase activity"/>
    <property type="evidence" value="ECO:0007669"/>
    <property type="project" value="UniProtKB-EC"/>
</dbReference>
<dbReference type="GO" id="GO:0002949">
    <property type="term" value="P:tRNA threonylcarbamoyladenosine modification"/>
    <property type="evidence" value="ECO:0007669"/>
    <property type="project" value="UniProtKB-UniRule"/>
</dbReference>
<dbReference type="CDD" id="cd24133">
    <property type="entry name" value="ASKHA_NBD_TsaD_bac"/>
    <property type="match status" value="1"/>
</dbReference>
<dbReference type="FunFam" id="3.30.420.40:FF:000012">
    <property type="entry name" value="tRNA N6-adenosine threonylcarbamoyltransferase"/>
    <property type="match status" value="1"/>
</dbReference>
<dbReference type="Gene3D" id="3.30.420.40">
    <property type="match status" value="2"/>
</dbReference>
<dbReference type="HAMAP" id="MF_01445">
    <property type="entry name" value="TsaD"/>
    <property type="match status" value="1"/>
</dbReference>
<dbReference type="InterPro" id="IPR043129">
    <property type="entry name" value="ATPase_NBD"/>
</dbReference>
<dbReference type="InterPro" id="IPR000905">
    <property type="entry name" value="Gcp-like_dom"/>
</dbReference>
<dbReference type="InterPro" id="IPR017861">
    <property type="entry name" value="KAE1/TsaD"/>
</dbReference>
<dbReference type="InterPro" id="IPR022450">
    <property type="entry name" value="TsaD"/>
</dbReference>
<dbReference type="NCBIfam" id="TIGR00329">
    <property type="entry name" value="gcp_kae1"/>
    <property type="match status" value="1"/>
</dbReference>
<dbReference type="NCBIfam" id="TIGR03723">
    <property type="entry name" value="T6A_TsaD_YgjD"/>
    <property type="match status" value="1"/>
</dbReference>
<dbReference type="PANTHER" id="PTHR11735">
    <property type="entry name" value="TRNA N6-ADENOSINE THREONYLCARBAMOYLTRANSFERASE"/>
    <property type="match status" value="1"/>
</dbReference>
<dbReference type="PANTHER" id="PTHR11735:SF6">
    <property type="entry name" value="TRNA N6-ADENOSINE THREONYLCARBAMOYLTRANSFERASE, MITOCHONDRIAL"/>
    <property type="match status" value="1"/>
</dbReference>
<dbReference type="Pfam" id="PF00814">
    <property type="entry name" value="TsaD"/>
    <property type="match status" value="1"/>
</dbReference>
<dbReference type="PRINTS" id="PR00789">
    <property type="entry name" value="OSIALOPTASE"/>
</dbReference>
<dbReference type="SUPFAM" id="SSF53067">
    <property type="entry name" value="Actin-like ATPase domain"/>
    <property type="match status" value="2"/>
</dbReference>
<accession>Q2G4K2</accession>
<name>TSAD_NOVAD</name>
<keyword id="KW-0012">Acyltransferase</keyword>
<keyword id="KW-0963">Cytoplasm</keyword>
<keyword id="KW-0408">Iron</keyword>
<keyword id="KW-0479">Metal-binding</keyword>
<keyword id="KW-1185">Reference proteome</keyword>
<keyword id="KW-0808">Transferase</keyword>
<keyword id="KW-0819">tRNA processing</keyword>
<gene>
    <name evidence="1" type="primary">tsaD</name>
    <name type="synonym">gcp</name>
    <name type="ordered locus">Saro_2785</name>
</gene>
<organism>
    <name type="scientific">Novosphingobium aromaticivorans (strain ATCC 700278 / DSM 12444 / CCUG 56034 / CIP 105152 / NBRC 16084 / F199)</name>
    <dbReference type="NCBI Taxonomy" id="279238"/>
    <lineage>
        <taxon>Bacteria</taxon>
        <taxon>Pseudomonadati</taxon>
        <taxon>Pseudomonadota</taxon>
        <taxon>Alphaproteobacteria</taxon>
        <taxon>Sphingomonadales</taxon>
        <taxon>Sphingomonadaceae</taxon>
        <taxon>Novosphingobium</taxon>
    </lineage>
</organism>